<organism>
    <name type="scientific">Leishmania major</name>
    <dbReference type="NCBI Taxonomy" id="5664"/>
    <lineage>
        <taxon>Eukaryota</taxon>
        <taxon>Discoba</taxon>
        <taxon>Euglenozoa</taxon>
        <taxon>Kinetoplastea</taxon>
        <taxon>Metakinetoplastina</taxon>
        <taxon>Trypanosomatida</taxon>
        <taxon>Trypanosomatidae</taxon>
        <taxon>Leishmaniinae</taxon>
        <taxon>Leishmania</taxon>
    </lineage>
</organism>
<keyword id="KW-0067">ATP-binding</keyword>
<keyword id="KW-0347">Helicase</keyword>
<keyword id="KW-0378">Hydrolase</keyword>
<keyword id="KW-0396">Initiation factor</keyword>
<keyword id="KW-0547">Nucleotide-binding</keyword>
<keyword id="KW-0648">Protein biosynthesis</keyword>
<keyword id="KW-1185">Reference proteome</keyword>
<keyword id="KW-0694">RNA-binding</keyword>
<protein>
    <recommendedName>
        <fullName>Probable eukaryotic initiation factor 4A</fullName>
        <shortName>eIF-4A</shortName>
        <ecNumber>3.6.4.13</ecNumber>
    </recommendedName>
    <alternativeName>
        <fullName>ATP-dependent RNA helicase eIF4A</fullName>
    </alternativeName>
</protein>
<gene>
    <name type="ORF">LmjF.01.0770</name>
</gene>
<gene>
    <name type="ORF">LmjF.01.0780</name>
</gene>
<comment type="function">
    <text evidence="1">ATP-dependent RNA helicase which is a subunit of the eIF4F complex involved in cap recognition and is required for mRNA binding to ribosome. In the current model of translation initiation, eIF4A unwinds RNA secondary structures in the 5'-UTR of mRNAs which is necessary to allow efficient binding of the small ribosomal subunit, and subsequent scanning for the initiator codon (By similarity).</text>
</comment>
<comment type="catalytic activity">
    <reaction>
        <text>ATP + H2O = ADP + phosphate + H(+)</text>
        <dbReference type="Rhea" id="RHEA:13065"/>
        <dbReference type="ChEBI" id="CHEBI:15377"/>
        <dbReference type="ChEBI" id="CHEBI:15378"/>
        <dbReference type="ChEBI" id="CHEBI:30616"/>
        <dbReference type="ChEBI" id="CHEBI:43474"/>
        <dbReference type="ChEBI" id="CHEBI:456216"/>
        <dbReference type="EC" id="3.6.4.13"/>
    </reaction>
</comment>
<comment type="subunit">
    <text evidence="1">eIF4F is a multi-subunit complex, the composition of which varies with external and internal environmental conditions. It is composed of at least EIF4A, EIF4E and EIF4G (By similarity).</text>
</comment>
<comment type="similarity">
    <text evidence="5">Belongs to the DEAD box helicase family. eIF4A subfamily.</text>
</comment>
<reference key="1">
    <citation type="journal article" date="1999" name="Proc. Natl. Acad. Sci. U.S.A.">
        <title>Leishmania major Friedlin chromosome 1 has an unusual distribution of protein-coding genes.</title>
        <authorList>
            <person name="Myler P.J."/>
            <person name="Audleman L."/>
            <person name="deVos T."/>
            <person name="Hixson G."/>
            <person name="Kiser P."/>
            <person name="Lemley C."/>
            <person name="Magness C."/>
            <person name="Rickel E."/>
            <person name="Sisk E."/>
            <person name="Sunkin S."/>
            <person name="Swartzell S."/>
            <person name="Westlake T."/>
            <person name="Bastien P."/>
            <person name="Fu G."/>
            <person name="Ivens A."/>
            <person name="Stuart K."/>
        </authorList>
    </citation>
    <scope>NUCLEOTIDE SEQUENCE [LARGE SCALE GENOMIC DNA]</scope>
    <source>
        <strain>MHOM/IL/81/Friedlin</strain>
    </source>
</reference>
<reference key="2">
    <citation type="journal article" date="2005" name="Science">
        <title>The genome of the kinetoplastid parasite, Leishmania major.</title>
        <authorList>
            <person name="Ivens A.C."/>
            <person name="Peacock C.S."/>
            <person name="Worthey E.A."/>
            <person name="Murphy L."/>
            <person name="Aggarwal G."/>
            <person name="Berriman M."/>
            <person name="Sisk E."/>
            <person name="Rajandream M.A."/>
            <person name="Adlem E."/>
            <person name="Aert R."/>
            <person name="Anupama A."/>
            <person name="Apostolou Z."/>
            <person name="Attipoe P."/>
            <person name="Bason N."/>
            <person name="Bauser C."/>
            <person name="Beck A."/>
            <person name="Beverley S.M."/>
            <person name="Bianchettin G."/>
            <person name="Borzym K."/>
            <person name="Bothe G."/>
            <person name="Bruschi C.V."/>
            <person name="Collins M."/>
            <person name="Cadag E."/>
            <person name="Ciarloni L."/>
            <person name="Clayton C."/>
            <person name="Coulson R.M.R."/>
            <person name="Cronin A."/>
            <person name="Cruz A.K."/>
            <person name="Davies R.M."/>
            <person name="De Gaudenzi J."/>
            <person name="Dobson D.E."/>
            <person name="Duesterhoeft A."/>
            <person name="Fazelina G."/>
            <person name="Fosker N."/>
            <person name="Frasch A.C."/>
            <person name="Fraser A."/>
            <person name="Fuchs M."/>
            <person name="Gabel C."/>
            <person name="Goble A."/>
            <person name="Goffeau A."/>
            <person name="Harris D."/>
            <person name="Hertz-Fowler C."/>
            <person name="Hilbert H."/>
            <person name="Horn D."/>
            <person name="Huang Y."/>
            <person name="Klages S."/>
            <person name="Knights A."/>
            <person name="Kube M."/>
            <person name="Larke N."/>
            <person name="Litvin L."/>
            <person name="Lord A."/>
            <person name="Louie T."/>
            <person name="Marra M."/>
            <person name="Masuy D."/>
            <person name="Matthews K."/>
            <person name="Michaeli S."/>
            <person name="Mottram J.C."/>
            <person name="Mueller-Auer S."/>
            <person name="Munden H."/>
            <person name="Nelson S."/>
            <person name="Norbertczak H."/>
            <person name="Oliver K."/>
            <person name="O'neil S."/>
            <person name="Pentony M."/>
            <person name="Pohl T.M."/>
            <person name="Price C."/>
            <person name="Purnelle B."/>
            <person name="Quail M.A."/>
            <person name="Rabbinowitsch E."/>
            <person name="Reinhardt R."/>
            <person name="Rieger M."/>
            <person name="Rinta J."/>
            <person name="Robben J."/>
            <person name="Robertson L."/>
            <person name="Ruiz J.C."/>
            <person name="Rutter S."/>
            <person name="Saunders D."/>
            <person name="Schaefer M."/>
            <person name="Schein J."/>
            <person name="Schwartz D.C."/>
            <person name="Seeger K."/>
            <person name="Seyler A."/>
            <person name="Sharp S."/>
            <person name="Shin H."/>
            <person name="Sivam D."/>
            <person name="Squares R."/>
            <person name="Squares S."/>
            <person name="Tosato V."/>
            <person name="Vogt C."/>
            <person name="Volckaert G."/>
            <person name="Wambutt R."/>
            <person name="Warren T."/>
            <person name="Wedler H."/>
            <person name="Woodward J."/>
            <person name="Zhou S."/>
            <person name="Zimmermann W."/>
            <person name="Smith D.F."/>
            <person name="Blackwell J.M."/>
            <person name="Stuart K.D."/>
            <person name="Barrell B.G."/>
            <person name="Myler P.J."/>
        </authorList>
    </citation>
    <scope>NUCLEOTIDE SEQUENCE [LARGE SCALE GENOMIC DNA]</scope>
    <source>
        <strain>MHOM/IL/81/Friedlin</strain>
    </source>
</reference>
<proteinExistence type="inferred from homology"/>
<feature type="chain" id="PRO_0000291643" description="Probable eukaryotic initiation factor 4A">
    <location>
        <begin position="1"/>
        <end position="403"/>
    </location>
</feature>
<feature type="domain" description="Helicase ATP-binding" evidence="2">
    <location>
        <begin position="57"/>
        <end position="230"/>
    </location>
</feature>
<feature type="domain" description="Helicase C-terminal" evidence="3">
    <location>
        <begin position="241"/>
        <end position="401"/>
    </location>
</feature>
<feature type="region of interest" description="Disordered" evidence="4">
    <location>
        <begin position="1"/>
        <end position="29"/>
    </location>
</feature>
<feature type="short sequence motif" description="Q motif">
    <location>
        <begin position="26"/>
        <end position="54"/>
    </location>
</feature>
<feature type="short sequence motif" description="DEAD box">
    <location>
        <begin position="178"/>
        <end position="181"/>
    </location>
</feature>
<feature type="binding site" evidence="2">
    <location>
        <begin position="70"/>
        <end position="77"/>
    </location>
    <ligand>
        <name>ATP</name>
        <dbReference type="ChEBI" id="CHEBI:30616"/>
    </ligand>
</feature>
<evidence type="ECO:0000250" key="1"/>
<evidence type="ECO:0000255" key="2">
    <source>
        <dbReference type="PROSITE-ProRule" id="PRU00541"/>
    </source>
</evidence>
<evidence type="ECO:0000255" key="3">
    <source>
        <dbReference type="PROSITE-ProRule" id="PRU00542"/>
    </source>
</evidence>
<evidence type="ECO:0000256" key="4">
    <source>
        <dbReference type="SAM" id="MobiDB-lite"/>
    </source>
</evidence>
<evidence type="ECO:0000305" key="5"/>
<name>IF4A_LEIMA</name>
<accession>O62591</accession>
<accession>E9AC68</accession>
<sequence>MAQNDKIAPQDQDSFLDDQPGVRPIPSFDDMPLHQNLLRGIYSYGFEKPSSIQQRAIAPFTRGGDIIAQAQSGTGKTGAFSIGLLQRLDFRHNLIQGLVLSPTRELALQTAEVISRIGEFLSNSSKFCETFVGGTRVQDDLRKLQAGVIVAVGTPGRVSDVIKRGALRTESLRVLVLDEADEMLSQGFADQIYEIFRFLPKDIQVALFSATMPEEVLELTKKFMRDPVRILVKRESLTLEGIKQFFIAVEEEHKLDTLMDLYETVSIAQSVIFANTRRKVDWIAEKLNQSNHTVSSMHAEMPKSDRERVMNTFRSGSSRVLVTTDLVARGIDVHHVNIVINFDLPTNKENYLHRIGRGGRYGRKGVAINFVTEKDVELLHEIEAHYHTQIDELPVDFAAYLGE</sequence>
<dbReference type="EC" id="3.6.4.13"/>
<dbReference type="EMBL" id="FR796397">
    <property type="protein sequence ID" value="CBZ11882.1"/>
    <property type="molecule type" value="Genomic_DNA"/>
</dbReference>
<dbReference type="EMBL" id="FR796397">
    <property type="protein sequence ID" value="CBZ11883.1"/>
    <property type="molecule type" value="Genomic_DNA"/>
</dbReference>
<dbReference type="PIR" id="A81464">
    <property type="entry name" value="A81464"/>
</dbReference>
<dbReference type="RefSeq" id="XP_003721599.1">
    <property type="nucleotide sequence ID" value="XM_003721551.1"/>
</dbReference>
<dbReference type="RefSeq" id="XP_003721600.1">
    <property type="nucleotide sequence ID" value="XM_003721552.1"/>
</dbReference>
<dbReference type="SMR" id="O62591"/>
<dbReference type="FunCoup" id="O62591">
    <property type="interactions" value="380"/>
</dbReference>
<dbReference type="STRING" id="5664.O62591"/>
<dbReference type="EnsemblProtists" id="CBZ11882">
    <property type="protein sequence ID" value="CBZ11882"/>
    <property type="gene ID" value="LMJF_01_0770"/>
</dbReference>
<dbReference type="EnsemblProtists" id="CBZ11883">
    <property type="protein sequence ID" value="CBZ11883"/>
    <property type="gene ID" value="LMJF_01_0780"/>
</dbReference>
<dbReference type="KEGG" id="lma:LMJF_01_0770"/>
<dbReference type="KEGG" id="lma:LMJF_01_0780"/>
<dbReference type="VEuPathDB" id="TriTrypDB:LmjF.01.0770"/>
<dbReference type="VEuPathDB" id="TriTrypDB:LMJFC_010013300"/>
<dbReference type="VEuPathDB" id="TriTrypDB:LMJLV39_010013100"/>
<dbReference type="VEuPathDB" id="TriTrypDB:LMJSD75_010013100"/>
<dbReference type="eggNOG" id="KOG0327">
    <property type="taxonomic scope" value="Eukaryota"/>
</dbReference>
<dbReference type="InParanoid" id="O62591"/>
<dbReference type="OMA" id="FGCQALV"/>
<dbReference type="Proteomes" id="UP000000542">
    <property type="component" value="Chromosome 1"/>
</dbReference>
<dbReference type="GO" id="GO:0005737">
    <property type="term" value="C:cytoplasm"/>
    <property type="evidence" value="ECO:0000247"/>
    <property type="project" value="GeneDB"/>
</dbReference>
<dbReference type="GO" id="GO:0010494">
    <property type="term" value="C:cytoplasmic stress granule"/>
    <property type="evidence" value="ECO:0000318"/>
    <property type="project" value="GO_Central"/>
</dbReference>
<dbReference type="GO" id="GO:0016281">
    <property type="term" value="C:eukaryotic translation initiation factor 4F complex"/>
    <property type="evidence" value="ECO:0000353"/>
    <property type="project" value="GeneDB"/>
</dbReference>
<dbReference type="GO" id="GO:0005524">
    <property type="term" value="F:ATP binding"/>
    <property type="evidence" value="ECO:0007669"/>
    <property type="project" value="UniProtKB-KW"/>
</dbReference>
<dbReference type="GO" id="GO:0016887">
    <property type="term" value="F:ATP hydrolysis activity"/>
    <property type="evidence" value="ECO:0007669"/>
    <property type="project" value="RHEA"/>
</dbReference>
<dbReference type="GO" id="GO:0008186">
    <property type="term" value="F:ATP-dependent activity, acting on RNA"/>
    <property type="evidence" value="ECO:0000266"/>
    <property type="project" value="GeneDB"/>
</dbReference>
<dbReference type="GO" id="GO:0003723">
    <property type="term" value="F:RNA binding"/>
    <property type="evidence" value="ECO:0007669"/>
    <property type="project" value="UniProtKB-KW"/>
</dbReference>
<dbReference type="GO" id="GO:0003724">
    <property type="term" value="F:RNA helicase activity"/>
    <property type="evidence" value="ECO:0007669"/>
    <property type="project" value="UniProtKB-EC"/>
</dbReference>
<dbReference type="GO" id="GO:0003743">
    <property type="term" value="F:translation initiation factor activity"/>
    <property type="evidence" value="ECO:0000318"/>
    <property type="project" value="GO_Central"/>
</dbReference>
<dbReference type="GO" id="GO:0002183">
    <property type="term" value="P:cytoplasmic translational initiation"/>
    <property type="evidence" value="ECO:0000318"/>
    <property type="project" value="GO_Central"/>
</dbReference>
<dbReference type="GO" id="GO:0006412">
    <property type="term" value="P:translation"/>
    <property type="evidence" value="ECO:0000247"/>
    <property type="project" value="GeneDB"/>
</dbReference>
<dbReference type="CDD" id="cd17939">
    <property type="entry name" value="DEADc_EIF4A"/>
    <property type="match status" value="1"/>
</dbReference>
<dbReference type="CDD" id="cd18787">
    <property type="entry name" value="SF2_C_DEAD"/>
    <property type="match status" value="1"/>
</dbReference>
<dbReference type="FunFam" id="3.40.50.300:FF:000849">
    <property type="entry name" value="ATP-dependent RNA helicase DBP5"/>
    <property type="match status" value="1"/>
</dbReference>
<dbReference type="FunFam" id="3.40.50.300:FF:000031">
    <property type="entry name" value="Eukaryotic initiation factor 4A-III"/>
    <property type="match status" value="1"/>
</dbReference>
<dbReference type="Gene3D" id="3.40.50.300">
    <property type="entry name" value="P-loop containing nucleotide triphosphate hydrolases"/>
    <property type="match status" value="2"/>
</dbReference>
<dbReference type="InterPro" id="IPR011545">
    <property type="entry name" value="DEAD/DEAH_box_helicase_dom"/>
</dbReference>
<dbReference type="InterPro" id="IPR050079">
    <property type="entry name" value="DEAD_box_RNA_helicase"/>
</dbReference>
<dbReference type="InterPro" id="IPR014001">
    <property type="entry name" value="Helicase_ATP-bd"/>
</dbReference>
<dbReference type="InterPro" id="IPR001650">
    <property type="entry name" value="Helicase_C-like"/>
</dbReference>
<dbReference type="InterPro" id="IPR027417">
    <property type="entry name" value="P-loop_NTPase"/>
</dbReference>
<dbReference type="InterPro" id="IPR000629">
    <property type="entry name" value="RNA-helicase_DEAD-box_CS"/>
</dbReference>
<dbReference type="InterPro" id="IPR014014">
    <property type="entry name" value="RNA_helicase_DEAD_Q_motif"/>
</dbReference>
<dbReference type="PANTHER" id="PTHR47959:SF1">
    <property type="entry name" value="ATP-DEPENDENT RNA HELICASE DBPA"/>
    <property type="match status" value="1"/>
</dbReference>
<dbReference type="PANTHER" id="PTHR47959">
    <property type="entry name" value="ATP-DEPENDENT RNA HELICASE RHLE-RELATED"/>
    <property type="match status" value="1"/>
</dbReference>
<dbReference type="Pfam" id="PF00270">
    <property type="entry name" value="DEAD"/>
    <property type="match status" value="1"/>
</dbReference>
<dbReference type="Pfam" id="PF00271">
    <property type="entry name" value="Helicase_C"/>
    <property type="match status" value="1"/>
</dbReference>
<dbReference type="SMART" id="SM00487">
    <property type="entry name" value="DEXDc"/>
    <property type="match status" value="1"/>
</dbReference>
<dbReference type="SMART" id="SM00490">
    <property type="entry name" value="HELICc"/>
    <property type="match status" value="1"/>
</dbReference>
<dbReference type="SUPFAM" id="SSF52540">
    <property type="entry name" value="P-loop containing nucleoside triphosphate hydrolases"/>
    <property type="match status" value="1"/>
</dbReference>
<dbReference type="PROSITE" id="PS00039">
    <property type="entry name" value="DEAD_ATP_HELICASE"/>
    <property type="match status" value="1"/>
</dbReference>
<dbReference type="PROSITE" id="PS51192">
    <property type="entry name" value="HELICASE_ATP_BIND_1"/>
    <property type="match status" value="1"/>
</dbReference>
<dbReference type="PROSITE" id="PS51194">
    <property type="entry name" value="HELICASE_CTER"/>
    <property type="match status" value="1"/>
</dbReference>
<dbReference type="PROSITE" id="PS51195">
    <property type="entry name" value="Q_MOTIF"/>
    <property type="match status" value="1"/>
</dbReference>